<protein>
    <recommendedName>
        <fullName evidence="1">Uracil phosphoribosyltransferase</fullName>
        <ecNumber evidence="1">2.4.2.9</ecNumber>
    </recommendedName>
    <alternativeName>
        <fullName evidence="1">UMP pyrophosphorylase</fullName>
    </alternativeName>
    <alternativeName>
        <fullName evidence="1">UPRTase</fullName>
    </alternativeName>
</protein>
<gene>
    <name evidence="1" type="primary">upp</name>
    <name type="ordered locus">LSL_0593</name>
</gene>
<organism>
    <name type="scientific">Ligilactobacillus salivarius (strain UCC118)</name>
    <name type="common">Lactobacillus salivarius</name>
    <dbReference type="NCBI Taxonomy" id="362948"/>
    <lineage>
        <taxon>Bacteria</taxon>
        <taxon>Bacillati</taxon>
        <taxon>Bacillota</taxon>
        <taxon>Bacilli</taxon>
        <taxon>Lactobacillales</taxon>
        <taxon>Lactobacillaceae</taxon>
        <taxon>Ligilactobacillus</taxon>
    </lineage>
</organism>
<keyword id="KW-0021">Allosteric enzyme</keyword>
<keyword id="KW-0328">Glycosyltransferase</keyword>
<keyword id="KW-0342">GTP-binding</keyword>
<keyword id="KW-0460">Magnesium</keyword>
<keyword id="KW-0547">Nucleotide-binding</keyword>
<keyword id="KW-1185">Reference proteome</keyword>
<keyword id="KW-0808">Transferase</keyword>
<sequence length="209" mass="23110">MGKFQVLDHPLIQHKLSIIRDKNCGTREFRQCVNEIAELMVYEVSRDMPLEDVEVETPITKATTKRLAGKKVVVVPILRAGIGMVDGILELIPAAKVGHIGMYRDEETLQPHEYFVKMPDDLENREMIIVDPMLATGGSAIMAVDALKKRGAKSIKFVCLVAAPEGVKAFREAHPDVDIYSASLDEYLNEDGYIVPGLGDAGDRLFGTK</sequence>
<name>UPP_LIGS1</name>
<accession>Q1WUD3</accession>
<evidence type="ECO:0000255" key="1">
    <source>
        <dbReference type="HAMAP-Rule" id="MF_01218"/>
    </source>
</evidence>
<reference key="1">
    <citation type="journal article" date="2006" name="Proc. Natl. Acad. Sci. U.S.A.">
        <title>Multireplicon genome architecture of Lactobacillus salivarius.</title>
        <authorList>
            <person name="Claesson M.J."/>
            <person name="Li Y."/>
            <person name="Leahy S."/>
            <person name="Canchaya C."/>
            <person name="van Pijkeren J.P."/>
            <person name="Cerdeno-Tarraga A.M."/>
            <person name="Parkhill J."/>
            <person name="Flynn S."/>
            <person name="O'Sullivan G.C."/>
            <person name="Collins J.K."/>
            <person name="Higgins D."/>
            <person name="Shanahan F."/>
            <person name="Fitzgerald G.F."/>
            <person name="van Sinderen D."/>
            <person name="O'Toole P.W."/>
        </authorList>
    </citation>
    <scope>NUCLEOTIDE SEQUENCE [LARGE SCALE GENOMIC DNA]</scope>
    <source>
        <strain>UCC118</strain>
    </source>
</reference>
<dbReference type="EC" id="2.4.2.9" evidence="1"/>
<dbReference type="EMBL" id="CP000233">
    <property type="protein sequence ID" value="ABD99402.1"/>
    <property type="molecule type" value="Genomic_DNA"/>
</dbReference>
<dbReference type="RefSeq" id="WP_003699935.1">
    <property type="nucleotide sequence ID" value="NC_007929.1"/>
</dbReference>
<dbReference type="RefSeq" id="YP_535485.1">
    <property type="nucleotide sequence ID" value="NC_007929.1"/>
</dbReference>
<dbReference type="SMR" id="Q1WUD3"/>
<dbReference type="STRING" id="362948.LSL_0593"/>
<dbReference type="GeneID" id="89465384"/>
<dbReference type="KEGG" id="lsl:LSL_0593"/>
<dbReference type="PATRIC" id="fig|362948.14.peg.672"/>
<dbReference type="HOGENOM" id="CLU_067096_2_2_9"/>
<dbReference type="OrthoDB" id="9781675at2"/>
<dbReference type="UniPathway" id="UPA00574">
    <property type="reaction ID" value="UER00636"/>
</dbReference>
<dbReference type="Proteomes" id="UP000006559">
    <property type="component" value="Chromosome"/>
</dbReference>
<dbReference type="GO" id="GO:0005525">
    <property type="term" value="F:GTP binding"/>
    <property type="evidence" value="ECO:0007669"/>
    <property type="project" value="UniProtKB-KW"/>
</dbReference>
<dbReference type="GO" id="GO:0000287">
    <property type="term" value="F:magnesium ion binding"/>
    <property type="evidence" value="ECO:0007669"/>
    <property type="project" value="UniProtKB-UniRule"/>
</dbReference>
<dbReference type="GO" id="GO:0004845">
    <property type="term" value="F:uracil phosphoribosyltransferase activity"/>
    <property type="evidence" value="ECO:0007669"/>
    <property type="project" value="UniProtKB-UniRule"/>
</dbReference>
<dbReference type="GO" id="GO:0044206">
    <property type="term" value="P:UMP salvage"/>
    <property type="evidence" value="ECO:0007669"/>
    <property type="project" value="UniProtKB-UniRule"/>
</dbReference>
<dbReference type="GO" id="GO:0006223">
    <property type="term" value="P:uracil salvage"/>
    <property type="evidence" value="ECO:0007669"/>
    <property type="project" value="InterPro"/>
</dbReference>
<dbReference type="CDD" id="cd06223">
    <property type="entry name" value="PRTases_typeI"/>
    <property type="match status" value="1"/>
</dbReference>
<dbReference type="FunFam" id="3.40.50.2020:FF:000003">
    <property type="entry name" value="Uracil phosphoribosyltransferase"/>
    <property type="match status" value="1"/>
</dbReference>
<dbReference type="Gene3D" id="3.40.50.2020">
    <property type="match status" value="1"/>
</dbReference>
<dbReference type="HAMAP" id="MF_01218_B">
    <property type="entry name" value="Upp_B"/>
    <property type="match status" value="1"/>
</dbReference>
<dbReference type="InterPro" id="IPR000836">
    <property type="entry name" value="PRibTrfase_dom"/>
</dbReference>
<dbReference type="InterPro" id="IPR029057">
    <property type="entry name" value="PRTase-like"/>
</dbReference>
<dbReference type="InterPro" id="IPR034332">
    <property type="entry name" value="Upp_B"/>
</dbReference>
<dbReference type="InterPro" id="IPR050054">
    <property type="entry name" value="UPRTase/APRTase"/>
</dbReference>
<dbReference type="InterPro" id="IPR005765">
    <property type="entry name" value="Ura_phspho_trans"/>
</dbReference>
<dbReference type="NCBIfam" id="NF001097">
    <property type="entry name" value="PRK00129.1"/>
    <property type="match status" value="1"/>
</dbReference>
<dbReference type="NCBIfam" id="TIGR01091">
    <property type="entry name" value="upp"/>
    <property type="match status" value="1"/>
</dbReference>
<dbReference type="PANTHER" id="PTHR32315">
    <property type="entry name" value="ADENINE PHOSPHORIBOSYLTRANSFERASE"/>
    <property type="match status" value="1"/>
</dbReference>
<dbReference type="PANTHER" id="PTHR32315:SF4">
    <property type="entry name" value="URACIL PHOSPHORIBOSYLTRANSFERASE, CHLOROPLASTIC"/>
    <property type="match status" value="1"/>
</dbReference>
<dbReference type="Pfam" id="PF14681">
    <property type="entry name" value="UPRTase"/>
    <property type="match status" value="1"/>
</dbReference>
<dbReference type="SUPFAM" id="SSF53271">
    <property type="entry name" value="PRTase-like"/>
    <property type="match status" value="1"/>
</dbReference>
<comment type="function">
    <text evidence="1">Catalyzes the conversion of uracil and 5-phospho-alpha-D-ribose 1-diphosphate (PRPP) to UMP and diphosphate.</text>
</comment>
<comment type="catalytic activity">
    <reaction evidence="1">
        <text>UMP + diphosphate = 5-phospho-alpha-D-ribose 1-diphosphate + uracil</text>
        <dbReference type="Rhea" id="RHEA:13017"/>
        <dbReference type="ChEBI" id="CHEBI:17568"/>
        <dbReference type="ChEBI" id="CHEBI:33019"/>
        <dbReference type="ChEBI" id="CHEBI:57865"/>
        <dbReference type="ChEBI" id="CHEBI:58017"/>
        <dbReference type="EC" id="2.4.2.9"/>
    </reaction>
</comment>
<comment type="cofactor">
    <cofactor evidence="1">
        <name>Mg(2+)</name>
        <dbReference type="ChEBI" id="CHEBI:18420"/>
    </cofactor>
    <text evidence="1">Binds 1 Mg(2+) ion per subunit. The magnesium is bound as Mg-PRPP.</text>
</comment>
<comment type="activity regulation">
    <text evidence="1">Allosterically activated by GTP.</text>
</comment>
<comment type="pathway">
    <text evidence="1">Pyrimidine metabolism; UMP biosynthesis via salvage pathway; UMP from uracil: step 1/1.</text>
</comment>
<comment type="similarity">
    <text evidence="1">Belongs to the UPRTase family.</text>
</comment>
<proteinExistence type="inferred from homology"/>
<feature type="chain" id="PRO_1000053734" description="Uracil phosphoribosyltransferase">
    <location>
        <begin position="1"/>
        <end position="209"/>
    </location>
</feature>
<feature type="binding site" evidence="1">
    <location>
        <position position="79"/>
    </location>
    <ligand>
        <name>5-phospho-alpha-D-ribose 1-diphosphate</name>
        <dbReference type="ChEBI" id="CHEBI:58017"/>
    </ligand>
</feature>
<feature type="binding site" evidence="1">
    <location>
        <position position="104"/>
    </location>
    <ligand>
        <name>5-phospho-alpha-D-ribose 1-diphosphate</name>
        <dbReference type="ChEBI" id="CHEBI:58017"/>
    </ligand>
</feature>
<feature type="binding site" evidence="1">
    <location>
        <begin position="131"/>
        <end position="139"/>
    </location>
    <ligand>
        <name>5-phospho-alpha-D-ribose 1-diphosphate</name>
        <dbReference type="ChEBI" id="CHEBI:58017"/>
    </ligand>
</feature>
<feature type="binding site" evidence="1">
    <location>
        <position position="194"/>
    </location>
    <ligand>
        <name>uracil</name>
        <dbReference type="ChEBI" id="CHEBI:17568"/>
    </ligand>
</feature>
<feature type="binding site" evidence="1">
    <location>
        <begin position="199"/>
        <end position="201"/>
    </location>
    <ligand>
        <name>uracil</name>
        <dbReference type="ChEBI" id="CHEBI:17568"/>
    </ligand>
</feature>
<feature type="binding site" evidence="1">
    <location>
        <position position="200"/>
    </location>
    <ligand>
        <name>5-phospho-alpha-D-ribose 1-diphosphate</name>
        <dbReference type="ChEBI" id="CHEBI:58017"/>
    </ligand>
</feature>